<sequence length="64" mass="7116">MAQRTRLGDILRPLNSEYGKVVPGWGTTPVMGVFMALFLVFLLIILQIYNSSLILEGFSVDWAG</sequence>
<dbReference type="EMBL" id="X17687">
    <property type="protein sequence ID" value="CAA35677.1"/>
    <property type="molecule type" value="Genomic_DNA"/>
</dbReference>
<dbReference type="EMBL" id="X16394">
    <property type="protein sequence ID" value="CAA34430.1"/>
    <property type="molecule type" value="Genomic_DNA"/>
</dbReference>
<dbReference type="EMBL" id="X58532">
    <property type="protein sequence ID" value="CAA41420.1"/>
    <property type="molecule type" value="Genomic_DNA"/>
</dbReference>
<dbReference type="EMBL" id="BA000022">
    <property type="protein sequence ID" value="BAA17629.1"/>
    <property type="molecule type" value="Genomic_DNA"/>
</dbReference>
<dbReference type="PIR" id="S07588">
    <property type="entry name" value="S07588"/>
</dbReference>
<dbReference type="PDB" id="6WJ6">
    <property type="method" value="EM"/>
    <property type="resolution" value="2.58 A"/>
    <property type="chains" value="H=1-64"/>
</dbReference>
<dbReference type="PDB" id="7N8O">
    <property type="method" value="EM"/>
    <property type="resolution" value="1.93 A"/>
    <property type="chains" value="H/h=2-64"/>
</dbReference>
<dbReference type="PDB" id="7RCV">
    <property type="method" value="EM"/>
    <property type="resolution" value="2.01 A"/>
    <property type="chains" value="H/h=2-64"/>
</dbReference>
<dbReference type="PDB" id="8TOW">
    <property type="method" value="EM"/>
    <property type="resolution" value="2.14 A"/>
    <property type="chains" value="H/h=1-64"/>
</dbReference>
<dbReference type="PDB" id="9EH5">
    <property type="method" value="EM"/>
    <property type="resolution" value="1.97 A"/>
    <property type="chains" value="H/h=1-64"/>
</dbReference>
<dbReference type="PDBsum" id="6WJ6"/>
<dbReference type="PDBsum" id="7N8O"/>
<dbReference type="PDBsum" id="7RCV"/>
<dbReference type="PDBsum" id="8TOW"/>
<dbReference type="PDBsum" id="9EH5"/>
<dbReference type="EMDB" id="EMD-21690"/>
<dbReference type="EMDB" id="EMD-24239"/>
<dbReference type="EMDB" id="EMD-24407"/>
<dbReference type="EMDB" id="EMD-41460"/>
<dbReference type="EMDB" id="EMD-48046"/>
<dbReference type="SMR" id="P14835"/>
<dbReference type="IntAct" id="P14835">
    <property type="interactions" value="6"/>
</dbReference>
<dbReference type="STRING" id="1148.gene:10498496"/>
<dbReference type="PaxDb" id="1148-1652709"/>
<dbReference type="EnsemblBacteria" id="BAA17629">
    <property type="protein sequence ID" value="BAA17629"/>
    <property type="gene ID" value="BAA17629"/>
</dbReference>
<dbReference type="KEGG" id="syn:ssl2598"/>
<dbReference type="eggNOG" id="ENOG50332MV">
    <property type="taxonomic scope" value="Bacteria"/>
</dbReference>
<dbReference type="InParanoid" id="P14835"/>
<dbReference type="PhylomeDB" id="P14835"/>
<dbReference type="BioCyc" id="MetaCyc:PSBH-MONOMER"/>
<dbReference type="Proteomes" id="UP000001425">
    <property type="component" value="Chromosome"/>
</dbReference>
<dbReference type="GO" id="GO:0031676">
    <property type="term" value="C:plasma membrane-derived thylakoid membrane"/>
    <property type="evidence" value="ECO:0007669"/>
    <property type="project" value="UniProtKB-SubCell"/>
</dbReference>
<dbReference type="GO" id="GO:0030096">
    <property type="term" value="C:plasma membrane-derived thylakoid photosystem II"/>
    <property type="evidence" value="ECO:0000314"/>
    <property type="project" value="UniProtKB"/>
</dbReference>
<dbReference type="GO" id="GO:0042301">
    <property type="term" value="F:phosphate ion binding"/>
    <property type="evidence" value="ECO:0007669"/>
    <property type="project" value="InterPro"/>
</dbReference>
<dbReference type="GO" id="GO:0015979">
    <property type="term" value="P:photosynthesis"/>
    <property type="evidence" value="ECO:0007669"/>
    <property type="project" value="UniProtKB-UniRule"/>
</dbReference>
<dbReference type="GO" id="GO:0050821">
    <property type="term" value="P:protein stabilization"/>
    <property type="evidence" value="ECO:0007669"/>
    <property type="project" value="InterPro"/>
</dbReference>
<dbReference type="Gene3D" id="1.20.5.880">
    <property type="entry name" value="Photosystem II reaction center protein H"/>
    <property type="match status" value="1"/>
</dbReference>
<dbReference type="HAMAP" id="MF_00752">
    <property type="entry name" value="PSII_PsbH"/>
    <property type="match status" value="1"/>
</dbReference>
<dbReference type="InterPro" id="IPR001056">
    <property type="entry name" value="PSII_PsbH"/>
</dbReference>
<dbReference type="InterPro" id="IPR036863">
    <property type="entry name" value="PSII_PsbH_sf"/>
</dbReference>
<dbReference type="NCBIfam" id="NF002728">
    <property type="entry name" value="PRK02624.1"/>
    <property type="match status" value="1"/>
</dbReference>
<dbReference type="PANTHER" id="PTHR34469">
    <property type="entry name" value="PHOTOSYSTEM II REACTION CENTER PROTEIN H"/>
    <property type="match status" value="1"/>
</dbReference>
<dbReference type="PANTHER" id="PTHR34469:SF4">
    <property type="entry name" value="PHOTOSYSTEM II REACTION CENTER PROTEIN H"/>
    <property type="match status" value="1"/>
</dbReference>
<dbReference type="Pfam" id="PF00737">
    <property type="entry name" value="PsbH"/>
    <property type="match status" value="1"/>
</dbReference>
<dbReference type="SUPFAM" id="SSF161025">
    <property type="entry name" value="Photosystem II 10 kDa phosphoprotein PsbH"/>
    <property type="match status" value="1"/>
</dbReference>
<proteinExistence type="evidence at protein level"/>
<accession>P14835</accession>
<feature type="initiator methionine" description="Removed" evidence="2">
    <location>
        <position position="1"/>
    </location>
</feature>
<feature type="chain" id="PRO_0000070550" description="Photosystem II reaction center protein H">
    <location>
        <begin position="2"/>
        <end position="64"/>
    </location>
</feature>
<feature type="transmembrane region" description="Helical" evidence="4 10">
    <location>
        <begin position="28"/>
        <end position="50"/>
    </location>
</feature>
<feature type="helix" evidence="13">
    <location>
        <begin position="6"/>
        <end position="11"/>
    </location>
</feature>
<feature type="helix" evidence="13">
    <location>
        <begin position="12"/>
        <end position="15"/>
    </location>
</feature>
<feature type="turn" evidence="13">
    <location>
        <begin position="24"/>
        <end position="27"/>
    </location>
</feature>
<feature type="helix" evidence="13">
    <location>
        <begin position="28"/>
        <end position="49"/>
    </location>
</feature>
<evidence type="ECO:0000255" key="1">
    <source>
        <dbReference type="HAMAP-Rule" id="MF_00752"/>
    </source>
</evidence>
<evidence type="ECO:0000269" key="2">
    <source>
    </source>
</evidence>
<evidence type="ECO:0000269" key="3">
    <source>
    </source>
</evidence>
<evidence type="ECO:0000269" key="4">
    <source>
    </source>
</evidence>
<evidence type="ECO:0000269" key="5">
    <source>
    </source>
</evidence>
<evidence type="ECO:0000269" key="6">
    <source>
    </source>
</evidence>
<evidence type="ECO:0000269" key="7">
    <source>
    </source>
</evidence>
<evidence type="ECO:0000269" key="8">
    <source ref="6"/>
</evidence>
<evidence type="ECO:0000303" key="9">
    <source>
    </source>
</evidence>
<evidence type="ECO:0000312" key="10">
    <source>
        <dbReference type="PDB" id="7N8O"/>
    </source>
</evidence>
<evidence type="ECO:0007744" key="11">
    <source>
        <dbReference type="PDB" id="7N8O"/>
    </source>
</evidence>
<evidence type="ECO:0007744" key="12">
    <source>
        <dbReference type="PDB" id="7RCV"/>
    </source>
</evidence>
<evidence type="ECO:0007829" key="13">
    <source>
        <dbReference type="PDB" id="7N8O"/>
    </source>
</evidence>
<reference key="1">
    <citation type="journal article" date="1990" name="Nucleic Acids Res.">
        <title>Nucleotide sequence of the psbH gene of the cyanobacterium Synechocystis 6803.</title>
        <authorList>
            <person name="Mayes S.R."/>
            <person name="Barber J."/>
        </authorList>
    </citation>
    <scope>NUCLEOTIDE SEQUENCE [GENOMIC DNA]</scope>
    <source>
        <strain>ATCC 27184 / PCC 6803 / Kazusa</strain>
    </source>
</reference>
<reference key="2">
    <citation type="journal article" date="1990" name="Plant Mol. Biol.">
        <title>Cloning and nucleotide sequence of the psbH gene from cyanobacterium Synechocystis 6803.</title>
        <authorList>
            <person name="Abdel-Mawgood A.L."/>
            <person name="Dilley R.A."/>
        </authorList>
    </citation>
    <scope>NUCLEOTIDE SEQUENCE [GENOMIC DNA]</scope>
    <source>
        <strain>ATCC 27184 / PCC 6803 / Kazusa</strain>
    </source>
</reference>
<reference key="3">
    <citation type="journal article" date="1991" name="Plant Mol. Biol.">
        <title>Primary structure of the psbN-psbH-petC-petA gene cluster of the cyanobacterium Synechocystis PCC 6803.</title>
        <authorList>
            <person name="Mayes S.R."/>
            <person name="Barber J."/>
        </authorList>
    </citation>
    <scope>NUCLEOTIDE SEQUENCE [GENOMIC DNA]</scope>
    <source>
        <strain>ATCC 27184 / PCC 6803 / Kazusa</strain>
    </source>
</reference>
<reference key="4">
    <citation type="journal article" date="1996" name="DNA Res.">
        <title>Sequence analysis of the genome of the unicellular cyanobacterium Synechocystis sp. strain PCC6803. II. Sequence determination of the entire genome and assignment of potential protein-coding regions.</title>
        <authorList>
            <person name="Kaneko T."/>
            <person name="Sato S."/>
            <person name="Kotani H."/>
            <person name="Tanaka A."/>
            <person name="Asamizu E."/>
            <person name="Nakamura Y."/>
            <person name="Miyajima N."/>
            <person name="Hirosawa M."/>
            <person name="Sugiura M."/>
            <person name="Sasamoto S."/>
            <person name="Kimura T."/>
            <person name="Hosouchi T."/>
            <person name="Matsuno A."/>
            <person name="Muraki A."/>
            <person name="Nakazaki N."/>
            <person name="Naruo K."/>
            <person name="Okumura S."/>
            <person name="Shimpo S."/>
            <person name="Takeuchi C."/>
            <person name="Wada T."/>
            <person name="Watanabe A."/>
            <person name="Yamada M."/>
            <person name="Yasuda M."/>
            <person name="Tabata S."/>
        </authorList>
    </citation>
    <scope>NUCLEOTIDE SEQUENCE [LARGE SCALE GENOMIC DNA]</scope>
    <source>
        <strain>ATCC 27184 / PCC 6803 / Kazusa</strain>
    </source>
</reference>
<reference key="5">
    <citation type="journal article" date="2002" name="Biochemistry">
        <title>Proteomic analysis of a highly active photosystem II preparation from the cyanobacterium Synechocystis sp. PCC 6803 reveals the presence of novel polypeptides.</title>
        <authorList>
            <person name="Kashino Y."/>
            <person name="Lauber W.M."/>
            <person name="Carroll J.A."/>
            <person name="Wang Q."/>
            <person name="Whitmarsh J."/>
            <person name="Satoh K."/>
            <person name="Pakrasi H.B."/>
        </authorList>
    </citation>
    <scope>PROTEIN SEQUENCE OF 2-18</scope>
    <scope>IDENTIFICATION BY MASS SPECTROMETRY</scope>
    <scope>SUBUNIT</scope>
    <scope>SUBCELLULAR LOCATION</scope>
    <source>
        <strain>ATCC 27184 / PCC 6803 / Kazusa</strain>
    </source>
</reference>
<reference key="6">
    <citation type="journal article" date="1993" name="Biochemistry">
        <title>Further characterization of the psbH locus of Synechocystis sp. PCC 6803: Inactivation of psbH impairs QA to QB electron transport in photosystem 2.</title>
        <authorList>
            <person name="Mayes S.R."/>
            <person name="Dubbs J.M."/>
            <person name="Vass I."/>
            <person name="Hideg E."/>
            <person name="Nagy L."/>
            <person name="Barber J."/>
        </authorList>
    </citation>
    <scope>FUNCTION</scope>
    <scope>SUBUNIT</scope>
    <scope>INDUCTION</scope>
    <scope>DISRUPTION PHENOTYPE</scope>
    <source>
        <strain>PCC 6803-G</strain>
    </source>
</reference>
<reference key="7">
    <citation type="journal article" date="1993" name="FEBS Lett.">
        <title>Identification of the psbH gene product as a 6 kDa phosphoprotein in the cyanobacterium Synechocystis 6803.</title>
        <authorList>
            <person name="Race H.L."/>
            <person name="Gounaris K."/>
        </authorList>
    </citation>
    <scope>SUBCELLULAR LOCATION</scope>
    <scope>PHOSPHORYLATION</scope>
    <source>
        <strain>ATCC 27184 / PCC 6803 / Kazusa</strain>
    </source>
</reference>
<reference key="8">
    <citation type="journal article" date="1995" name="Biochemistry">
        <title>Comparison of psbO and psbH deletion mutants of Synechocystis PCC 6803 indicates that degradation of D1 protein is regulated by the QB site and dependent on protein synthesis.</title>
        <authorList>
            <person name="Komenda J."/>
            <person name="Barber J."/>
        </authorList>
    </citation>
    <scope>FUNCTION</scope>
    <scope>DISRUPTION PHENOTYPE</scope>
    <source>
        <strain>PCC 6803-G</strain>
    </source>
</reference>
<reference key="9">
    <citation type="journal article" date="2006" name="J. Biol. Chem.">
        <title>Cyanobacterial small chlorophyll-binding protein ScpD (HliB) is located on the periphery of photosystem II in the vicinity of PsbH and CP47 subunits.</title>
        <authorList>
            <person name="Promnares K."/>
            <person name="Komenda J."/>
            <person name="Bumba L."/>
            <person name="Nebesarova J."/>
            <person name="Vacha F."/>
            <person name="Tichy M."/>
        </authorList>
    </citation>
    <scope>FUNCTION</scope>
    <scope>DISRUPTION PHENOTYPE</scope>
    <source>
        <strain>ATCC 27184 / PCC 6803 / Kazusa</strain>
    </source>
</reference>
<reference key="10">
    <citation type="journal article" date="2022" name="Photosyn. Res.">
        <title>Psb34 protein modulates binding of high-light-inducible proteins to CP47-containing photosystem II assembly intermediates in the cyanobacterium Synechocystis sp. PCC 6803.</title>
        <authorList>
            <person name="Rahimzadeh-Karvansara P."/>
            <person name="Pascual-Aznar G."/>
            <person name="Beckova M."/>
            <person name="Komenda J."/>
        </authorList>
    </citation>
    <scope>FUNCTION</scope>
    <scope>DISRUPTION PHENOTYPE</scope>
    <source>
        <strain>ATCC 27184 / PCC 6803 / Kazusa</strain>
    </source>
</reference>
<reference evidence="11 12" key="11">
    <citation type="journal article" date="2022" name="Proc. Natl. Acad. Sci. U.S.A.">
        <title>High-resolution cryo-electron microscopy structure of photosystem II from the mesophilic cyanobacterium, Synechocystis sp. PCC 6803.</title>
        <authorList>
            <person name="Gisriel C.J."/>
            <person name="Wang J."/>
            <person name="Liu J."/>
            <person name="Flesher D.A."/>
            <person name="Reiss K.M."/>
            <person name="Huang H.L."/>
            <person name="Yang K.R."/>
            <person name="Armstrong W.H."/>
            <person name="Gunner M.R."/>
            <person name="Batista V.S."/>
            <person name="Debus R.J."/>
            <person name="Brudvig G.W."/>
        </authorList>
    </citation>
    <scope>STRUCTURE BY ELECTRON MICROSCOPY (1.93 ANGSTROMS) OF 2-64</scope>
    <scope>FUNCTION</scope>
    <scope>SUBUNIT</scope>
    <scope>SUBCELLULAR LOCATION</scope>
    <source>
        <strain>ATCC 27184 / PCC 6803 / Kazusa</strain>
    </source>
</reference>
<keyword id="KW-0002">3D-structure</keyword>
<keyword id="KW-0903">Direct protein sequencing</keyword>
<keyword id="KW-0472">Membrane</keyword>
<keyword id="KW-0602">Photosynthesis</keyword>
<keyword id="KW-0604">Photosystem II</keyword>
<keyword id="KW-1185">Reference proteome</keyword>
<keyword id="KW-0793">Thylakoid</keyword>
<keyword id="KW-0812">Transmembrane</keyword>
<keyword id="KW-1133">Transmembrane helix</keyword>
<protein>
    <recommendedName>
        <fullName evidence="1">Photosystem II reaction center protein H</fullName>
        <shortName evidence="1">PSII-H</shortName>
    </recommendedName>
    <alternativeName>
        <fullName evidence="9">6 kDa phosphoprotein</fullName>
    </alternativeName>
</protein>
<name>PSBH_SYNY3</name>
<comment type="function">
    <text evidence="4 6 8">One of the components of the core complex of photosystem II (PSII), required for its stability and/or assembly. May regulate electron transport between the quinone binding sites of the reaction center (PubMed:7626631, Ref.6). PSII is a light-driven water:plastoquinone oxidoreductase that uses light energy to abstract electrons from H(2)O, generating O(2) and a proton gradient subsequently used for ATP formation. It consists of a core antenna complex that captures photons, and an electron transfer chain that converts photonic excitation into a charge separation.</text>
</comment>
<comment type="function">
    <text evidence="3 5">Required for association of HliB and Psb34 with PSII (PubMed:16923804, PubMed:35279779).</text>
</comment>
<comment type="subunit">
    <text evidence="1 2 4 8">PSII is composed of 1 copy each of membrane proteins PsbA, PsbB, PsbC, PsbD, PsbE, PsbF, PsbH, PsbI, PsbJ, PsbK, PsbL, PsbM, PsbT, PsbX, PsbY, PsbZ, Psb30/Ycf12, peripheral proteins PsbO, CyanoQ (PsbQ), PsbU, PsbV and a large number of cofactors. It forms dimeric complexes.</text>
</comment>
<comment type="subcellular location">
    <subcellularLocation>
        <location evidence="1 2 4 7">Cellular thylakoid membrane</location>
        <topology evidence="1 4">Single-pass membrane protein</topology>
    </subcellularLocation>
</comment>
<comment type="induction">
    <text evidence="8">A monocistronic transcript that is strongly expressed.</text>
</comment>
<comment type="PTM">
    <text evidence="7">Phosphorylated in vitro in the presence or absence of light; phosphorylation is inhibited by oxidizing conditions, DCMU and zinc ions.</text>
</comment>
<comment type="disruption phenotype">
    <text evidence="3 5 6 8">Reduced growth under photoautotrophic conditions and increased photosensitivity; approximately normal amounts of PSII accumulate but electron flow from QA to QB is impaired (Ref.6). Increased photodamage to D1, which is degraded slower (PubMed:7626631). HliB no longer associates with PSII complexes (PubMed:16923804). Psb34 no longer associates with PSII complexes (PubMed:35279779).</text>
</comment>
<comment type="similarity">
    <text evidence="1">Belongs to the PsbH family.</text>
</comment>
<organism>
    <name type="scientific">Synechocystis sp. (strain ATCC 27184 / PCC 6803 / Kazusa)</name>
    <dbReference type="NCBI Taxonomy" id="1111708"/>
    <lineage>
        <taxon>Bacteria</taxon>
        <taxon>Bacillati</taxon>
        <taxon>Cyanobacteriota</taxon>
        <taxon>Cyanophyceae</taxon>
        <taxon>Synechococcales</taxon>
        <taxon>Merismopediaceae</taxon>
        <taxon>Synechocystis</taxon>
    </lineage>
</organism>
<gene>
    <name evidence="1" type="primary">psbH</name>
    <name type="ordered locus">ssl2598</name>
</gene>